<accession>W8P1J0</accession>
<feature type="signal peptide" evidence="2">
    <location>
        <begin position="1"/>
        <end position="16"/>
    </location>
</feature>
<feature type="chain" id="PRO_5007737304" description="Class II hydrophobin 1">
    <location>
        <begin position="17"/>
        <end position="98"/>
    </location>
</feature>
<feature type="disulfide bond" evidence="1">
    <location>
        <begin position="29"/>
        <end position="79"/>
    </location>
</feature>
<feature type="disulfide bond" evidence="1">
    <location>
        <begin position="39"/>
        <end position="70"/>
    </location>
</feature>
<feature type="disulfide bond" evidence="1">
    <location>
        <begin position="40"/>
        <end position="52"/>
    </location>
</feature>
<feature type="disulfide bond" evidence="1">
    <location>
        <begin position="80"/>
        <end position="92"/>
    </location>
</feature>
<dbReference type="EMBL" id="KF834267">
    <property type="protein sequence ID" value="AHL20218.1"/>
    <property type="molecule type" value="Genomic_DNA"/>
</dbReference>
<dbReference type="EMBL" id="CDPU01000027">
    <property type="protein sequence ID" value="CEO52203.1"/>
    <property type="molecule type" value="Genomic_DNA"/>
</dbReference>
<dbReference type="GO" id="GO:0005576">
    <property type="term" value="C:extracellular region"/>
    <property type="evidence" value="ECO:0007669"/>
    <property type="project" value="UniProtKB-KW"/>
</dbReference>
<dbReference type="CDD" id="cd23508">
    <property type="entry name" value="hydrophobin_II"/>
    <property type="match status" value="1"/>
</dbReference>
<dbReference type="Gene3D" id="3.20.120.10">
    <property type="entry name" value="Hydrophobin"/>
    <property type="match status" value="1"/>
</dbReference>
<dbReference type="InterPro" id="IPR010636">
    <property type="entry name" value="Cerato-ulmin_hydrophobin"/>
</dbReference>
<dbReference type="InterPro" id="IPR036686">
    <property type="entry name" value="Hydrophobin_sf"/>
</dbReference>
<dbReference type="PANTHER" id="PTHR42341">
    <property type="entry name" value="HYDROPHOBIN"/>
    <property type="match status" value="1"/>
</dbReference>
<dbReference type="PANTHER" id="PTHR42341:SF1">
    <property type="entry name" value="HYDROPHOBIN"/>
    <property type="match status" value="1"/>
</dbReference>
<dbReference type="Pfam" id="PF06766">
    <property type="entry name" value="Hydrophobin_2"/>
    <property type="match status" value="1"/>
</dbReference>
<dbReference type="SUPFAM" id="SSF101751">
    <property type="entry name" value="Hydrophobin II, HfbII"/>
    <property type="match status" value="1"/>
</dbReference>
<reference key="1">
    <citation type="journal article" date="2014" name="BMC Microbiol.">
        <title>Hydrophobins are required for conidial hydrophobicity and plant root colonization in the fungal biocontrol agent Clonostachys rosea.</title>
        <authorList>
            <person name="Dubey M.K."/>
            <person name="Jensen D.F."/>
            <person name="Karlsson M."/>
        </authorList>
    </citation>
    <scope>NUCLEOTIDE SEQUENCE [GENOMIC DNA]</scope>
    <scope>TISSUE SPECIFICITY</scope>
    <scope>INDUCTION</scope>
    <scope>FUNCTION</scope>
    <scope>DISRUPTION PHENOTYPE</scope>
    <source>
        <strain>IK726</strain>
    </source>
</reference>
<keyword id="KW-0134">Cell wall</keyword>
<keyword id="KW-0183">Conidiation</keyword>
<keyword id="KW-1015">Disulfide bond</keyword>
<keyword id="KW-0964">Secreted</keyword>
<keyword id="KW-0732">Signal</keyword>
<keyword id="KW-0749">Sporulation</keyword>
<name>HYD1_BIOOC</name>
<protein>
    <recommendedName>
        <fullName evidence="4">Class II hydrophobin 1</fullName>
    </recommendedName>
</protein>
<evidence type="ECO:0000250" key="1">
    <source>
        <dbReference type="UniProtKB" id="P79073"/>
    </source>
</evidence>
<evidence type="ECO:0000255" key="2"/>
<evidence type="ECO:0000269" key="3">
    <source>
    </source>
</evidence>
<evidence type="ECO:0000303" key="4">
    <source>
    </source>
</evidence>
<evidence type="ECO:0000305" key="5"/>
<gene>
    <name evidence="4" type="primary">Hyd1</name>
    <name type="ORF">BN869_000008261_1</name>
</gene>
<comment type="function">
    <text evidence="3 5">Aerial growth, conidiation, and dispersal of filamentous fungi in the environment rely upon a capability of their secreting small amphipathic proteins called hydrophobins (HPBs) with low sequence identity. Class I can self-assemble into an outermost layer of rodlet bundles on aerial cell surfaces, conferring cellular hydrophobicity that supports fungal growth, development and dispersal; whereas Class II form highly ordered films at water-air interfaces through intermolecular interactions but contribute nothing to the rodlet structure (Probable). Hyd1 is a class II hydrophobin that plays probably a role during conidiophore development and in intraspecific signaling or hyphal fusion (PubMed:24483277). Hyd1 and Hyd3 are jointly required for conidial hydrophobicity and dispersal, but seem not to be involved in mycelia hydrophobicity (PubMed:24483277). Inhibits conidial germination in environments not suitable for mycelial growth (PubMed:24483277). Not necessary for root adhesion and colonization (PubMed:24483277).</text>
</comment>
<comment type="subunit">
    <text evidence="1">Homodimer (By similarity). Homodimers further self-assemble to form highly ordered films at water-air interfaces through intermolecular interactions (By similarity).</text>
</comment>
<comment type="subcellular location">
    <subcellularLocation>
        <location evidence="1">Secreted</location>
    </subcellularLocation>
    <subcellularLocation>
        <location evidence="1">Secreted</location>
        <location evidence="1">Cell wall</location>
    </subcellularLocation>
</comment>
<comment type="tissue specificity">
    <text evidence="3">Expressed in mycelium, conidiating mycelium and aerial hyphae.</text>
</comment>
<comment type="induction">
    <text evidence="3">Expression is not affected by carbon nor nitrogen starvation (PubMed:24483277). Expression is induced during Bionectria ochroleuca self interaction (PubMed:24483277).</text>
</comment>
<comment type="disruption phenotype">
    <text evidence="3">Leads to increased growth rates, conidiation and enhanced tolerances of conidia to abiotic stresses.</text>
</comment>
<comment type="similarity">
    <text evidence="5">Belongs to the cerato-ulmin hydrophobin family.</text>
</comment>
<proteinExistence type="evidence at transcript level"/>
<sequence length="98" mass="10146">MQFFTTVVLFAAAAMALPGGQQSRPYDPCPNNLLSVPQCCDTDALGLVGLGCVAPPNNRPASPRAFADCCHASSRRPKCCAVTTGLEASVLCDDPAGF</sequence>
<organism>
    <name type="scientific">Bionectria ochroleuca</name>
    <name type="common">Gliocladium roseum</name>
    <dbReference type="NCBI Taxonomy" id="29856"/>
    <lineage>
        <taxon>Eukaryota</taxon>
        <taxon>Fungi</taxon>
        <taxon>Dikarya</taxon>
        <taxon>Ascomycota</taxon>
        <taxon>Pezizomycotina</taxon>
        <taxon>Sordariomycetes</taxon>
        <taxon>Hypocreomycetidae</taxon>
        <taxon>Hypocreales</taxon>
        <taxon>Bionectriaceae</taxon>
        <taxon>Clonostachys</taxon>
    </lineage>
</organism>